<keyword id="KW-0963">Cytoplasm</keyword>
<keyword id="KW-0413">Isomerase</keyword>
<keyword id="KW-0627">Porphyrin biosynthesis</keyword>
<keyword id="KW-0663">Pyridoxal phosphate</keyword>
<protein>
    <recommendedName>
        <fullName evidence="1">Glutamate-1-semialdehyde 2,1-aminomutase</fullName>
        <shortName evidence="1">GSA</shortName>
        <ecNumber evidence="1">5.4.3.8</ecNumber>
    </recommendedName>
    <alternativeName>
        <fullName evidence="1">Glutamate-1-semialdehyde aminotransferase</fullName>
        <shortName evidence="1">GSA-AT</shortName>
    </alternativeName>
</protein>
<proteinExistence type="inferred from homology"/>
<reference key="1">
    <citation type="journal article" date="2009" name="J. Bacteriol.">
        <title>Complete and draft genome sequences of six members of the Aquificales.</title>
        <authorList>
            <person name="Reysenbach A.-L."/>
            <person name="Hamamura N."/>
            <person name="Podar M."/>
            <person name="Griffiths E."/>
            <person name="Ferreira S."/>
            <person name="Hochstein R."/>
            <person name="Heidelberg J."/>
            <person name="Johnson J."/>
            <person name="Mead D."/>
            <person name="Pohorille A."/>
            <person name="Sarmiento M."/>
            <person name="Schweighofer K."/>
            <person name="Seshadri R."/>
            <person name="Voytek M.A."/>
        </authorList>
    </citation>
    <scope>NUCLEOTIDE SEQUENCE [LARGE SCALE GENOMIC DNA]</scope>
    <source>
        <strain>YO3AOP1</strain>
    </source>
</reference>
<feature type="chain" id="PRO_1000201035" description="Glutamate-1-semialdehyde 2,1-aminomutase">
    <location>
        <begin position="1"/>
        <end position="428"/>
    </location>
</feature>
<feature type="modified residue" description="N6-(pyridoxal phosphate)lysine" evidence="1">
    <location>
        <position position="267"/>
    </location>
</feature>
<organism>
    <name type="scientific">Sulfurihydrogenibium sp. (strain YO3AOP1)</name>
    <dbReference type="NCBI Taxonomy" id="436114"/>
    <lineage>
        <taxon>Bacteria</taxon>
        <taxon>Pseudomonadati</taxon>
        <taxon>Aquificota</taxon>
        <taxon>Aquificia</taxon>
        <taxon>Aquificales</taxon>
        <taxon>Hydrogenothermaceae</taxon>
        <taxon>Sulfurihydrogenibium</taxon>
    </lineage>
</organism>
<dbReference type="EC" id="5.4.3.8" evidence="1"/>
<dbReference type="EMBL" id="CP001080">
    <property type="protein sequence ID" value="ACD67034.1"/>
    <property type="molecule type" value="Genomic_DNA"/>
</dbReference>
<dbReference type="RefSeq" id="WP_012460091.1">
    <property type="nucleotide sequence ID" value="NC_010730.1"/>
</dbReference>
<dbReference type="SMR" id="B2V5U0"/>
<dbReference type="STRING" id="436114.SYO3AOP1_1432"/>
<dbReference type="KEGG" id="sul:SYO3AOP1_1432"/>
<dbReference type="eggNOG" id="COG0001">
    <property type="taxonomic scope" value="Bacteria"/>
</dbReference>
<dbReference type="HOGENOM" id="CLU_016922_1_5_0"/>
<dbReference type="UniPathway" id="UPA00251">
    <property type="reaction ID" value="UER00317"/>
</dbReference>
<dbReference type="GO" id="GO:0005737">
    <property type="term" value="C:cytoplasm"/>
    <property type="evidence" value="ECO:0007669"/>
    <property type="project" value="UniProtKB-SubCell"/>
</dbReference>
<dbReference type="GO" id="GO:0042286">
    <property type="term" value="F:glutamate-1-semialdehyde 2,1-aminomutase activity"/>
    <property type="evidence" value="ECO:0007669"/>
    <property type="project" value="UniProtKB-UniRule"/>
</dbReference>
<dbReference type="GO" id="GO:0030170">
    <property type="term" value="F:pyridoxal phosphate binding"/>
    <property type="evidence" value="ECO:0007669"/>
    <property type="project" value="InterPro"/>
</dbReference>
<dbReference type="GO" id="GO:0008483">
    <property type="term" value="F:transaminase activity"/>
    <property type="evidence" value="ECO:0007669"/>
    <property type="project" value="InterPro"/>
</dbReference>
<dbReference type="GO" id="GO:0006782">
    <property type="term" value="P:protoporphyrinogen IX biosynthetic process"/>
    <property type="evidence" value="ECO:0007669"/>
    <property type="project" value="UniProtKB-UniRule"/>
</dbReference>
<dbReference type="CDD" id="cd00610">
    <property type="entry name" value="OAT_like"/>
    <property type="match status" value="1"/>
</dbReference>
<dbReference type="FunFam" id="3.40.640.10:FF:000021">
    <property type="entry name" value="Glutamate-1-semialdehyde 2,1-aminomutase"/>
    <property type="match status" value="1"/>
</dbReference>
<dbReference type="Gene3D" id="3.90.1150.10">
    <property type="entry name" value="Aspartate Aminotransferase, domain 1"/>
    <property type="match status" value="1"/>
</dbReference>
<dbReference type="Gene3D" id="3.40.640.10">
    <property type="entry name" value="Type I PLP-dependent aspartate aminotransferase-like (Major domain)"/>
    <property type="match status" value="1"/>
</dbReference>
<dbReference type="HAMAP" id="MF_00375">
    <property type="entry name" value="HemL_aminotrans_3"/>
    <property type="match status" value="1"/>
</dbReference>
<dbReference type="InterPro" id="IPR004639">
    <property type="entry name" value="4pyrrol_synth_GluAld_NH2Trfase"/>
</dbReference>
<dbReference type="InterPro" id="IPR005814">
    <property type="entry name" value="Aminotrans_3"/>
</dbReference>
<dbReference type="InterPro" id="IPR049704">
    <property type="entry name" value="Aminotrans_3_PPA_site"/>
</dbReference>
<dbReference type="InterPro" id="IPR015424">
    <property type="entry name" value="PyrdxlP-dep_Trfase"/>
</dbReference>
<dbReference type="InterPro" id="IPR015421">
    <property type="entry name" value="PyrdxlP-dep_Trfase_major"/>
</dbReference>
<dbReference type="InterPro" id="IPR015422">
    <property type="entry name" value="PyrdxlP-dep_Trfase_small"/>
</dbReference>
<dbReference type="NCBIfam" id="TIGR00713">
    <property type="entry name" value="hemL"/>
    <property type="match status" value="1"/>
</dbReference>
<dbReference type="NCBIfam" id="NF000818">
    <property type="entry name" value="PRK00062.1"/>
    <property type="match status" value="1"/>
</dbReference>
<dbReference type="PANTHER" id="PTHR43713">
    <property type="entry name" value="GLUTAMATE-1-SEMIALDEHYDE 2,1-AMINOMUTASE"/>
    <property type="match status" value="1"/>
</dbReference>
<dbReference type="PANTHER" id="PTHR43713:SF3">
    <property type="entry name" value="GLUTAMATE-1-SEMIALDEHYDE 2,1-AMINOMUTASE 1, CHLOROPLASTIC-RELATED"/>
    <property type="match status" value="1"/>
</dbReference>
<dbReference type="Pfam" id="PF00202">
    <property type="entry name" value="Aminotran_3"/>
    <property type="match status" value="1"/>
</dbReference>
<dbReference type="SUPFAM" id="SSF53383">
    <property type="entry name" value="PLP-dependent transferases"/>
    <property type="match status" value="1"/>
</dbReference>
<dbReference type="PROSITE" id="PS00600">
    <property type="entry name" value="AA_TRANSFER_CLASS_3"/>
    <property type="match status" value="1"/>
</dbReference>
<accession>B2V5U0</accession>
<name>GSA_SULSY</name>
<comment type="catalytic activity">
    <reaction evidence="1">
        <text>(S)-4-amino-5-oxopentanoate = 5-aminolevulinate</text>
        <dbReference type="Rhea" id="RHEA:14265"/>
        <dbReference type="ChEBI" id="CHEBI:57501"/>
        <dbReference type="ChEBI" id="CHEBI:356416"/>
        <dbReference type="EC" id="5.4.3.8"/>
    </reaction>
</comment>
<comment type="cofactor">
    <cofactor evidence="1">
        <name>pyridoxal 5'-phosphate</name>
        <dbReference type="ChEBI" id="CHEBI:597326"/>
    </cofactor>
</comment>
<comment type="pathway">
    <text evidence="1">Porphyrin-containing compound metabolism; protoporphyrin-IX biosynthesis; 5-aminolevulinate from L-glutamyl-tRNA(Glu): step 2/2.</text>
</comment>
<comment type="subunit">
    <text evidence="1">Homodimer.</text>
</comment>
<comment type="subcellular location">
    <subcellularLocation>
        <location evidence="1">Cytoplasm</location>
    </subcellularLocation>
</comment>
<comment type="similarity">
    <text evidence="1">Belongs to the class-III pyridoxal-phosphate-dependent aminotransferase family. HemL subfamily.</text>
</comment>
<evidence type="ECO:0000255" key="1">
    <source>
        <dbReference type="HAMAP-Rule" id="MF_00375"/>
    </source>
</evidence>
<sequence length="428" mass="46886">MNNQKSKELFQEAQKYLVGGVNSPVRAFKAVEADPIFIKKGKGCRIWDVDDNEYIDYVLSWGPLILGHAHDQVINAIKQISNYGTSFGAPTELEVEMAKAVIDAVKSVEMVRFVNSGTEATMSAIRLARGYTKRKKIIKFDGCYHGHGDSLLVSAGSGVATLGIPGTPGIPEELASLTIVLPYNNIEAVEEAFEKYGDDIACVIIEPVAGNMGVVAPSKEYHQKLREITRKYGALLIFDEVMTGFRLSYGGAQELYDIEPDLTTFGKVIGGGLPVGAYGGKGEIMEYVAPVGPVYQAGTLSGNPLAMAAGLTQLQLLKQLNPYQELNEKGRFLEEGFKKISQETGVPVVVNRVGSMITVFFTDKEVVDFATAKTSDTKKFAKFFRCMLEKGIYLPASQFEAFFLSTAHSQRDLEDTLNKAYECFKQLS</sequence>
<gene>
    <name evidence="1" type="primary">hemL</name>
    <name type="ordered locus">SYO3AOP1_1432</name>
</gene>